<name>PVK1_EURFL</name>
<evidence type="ECO:0000255" key="1"/>
<evidence type="ECO:0000269" key="2">
    <source>
    </source>
</evidence>
<evidence type="ECO:0000303" key="3">
    <source>
    </source>
</evidence>
<evidence type="ECO:0000305" key="4"/>
<reference evidence="4" key="1">
    <citation type="journal article" date="2009" name="BMC Evol. Biol.">
        <title>A proteomic approach for studying insect phylogeny: CAPA peptides of ancient insect taxa (Dictyoptera, Blattoptera) as a test case.</title>
        <authorList>
            <person name="Roth S."/>
            <person name="Fromm B."/>
            <person name="Gaede G."/>
            <person name="Predel R."/>
        </authorList>
    </citation>
    <scope>PROTEIN SEQUENCE</scope>
    <scope>AMIDATION AT ASN-11</scope>
    <source>
        <tissue evidence="2">Abdominal perisympathetic organs</tissue>
    </source>
</reference>
<comment type="function">
    <text evidence="4">Mediates visceral muscle contractile activity (myotropic activity).</text>
</comment>
<comment type="subcellular location">
    <subcellularLocation>
        <location evidence="4">Secreted</location>
    </subcellularLocation>
</comment>
<comment type="similarity">
    <text evidence="1">Belongs to the periviscerokinin family.</text>
</comment>
<protein>
    <recommendedName>
        <fullName evidence="3">Periviscerokinin-1</fullName>
        <shortName evidence="3">EurFl-PVK-1</shortName>
    </recommendedName>
</protein>
<feature type="peptide" id="PRO_0000378743" description="Periviscerokinin-1" evidence="2">
    <location>
        <begin position="1"/>
        <end position="11"/>
    </location>
</feature>
<feature type="modified residue" description="Asparagine amide" evidence="2">
    <location>
        <position position="11"/>
    </location>
</feature>
<dbReference type="GO" id="GO:0005576">
    <property type="term" value="C:extracellular region"/>
    <property type="evidence" value="ECO:0007669"/>
    <property type="project" value="UniProtKB-SubCell"/>
</dbReference>
<dbReference type="GO" id="GO:0007218">
    <property type="term" value="P:neuropeptide signaling pathway"/>
    <property type="evidence" value="ECO:0007669"/>
    <property type="project" value="UniProtKB-KW"/>
</dbReference>
<organism>
    <name type="scientific">Eurycotis floridana</name>
    <name type="common">Florida woods cockroach</name>
    <name type="synonym">Skunk roach</name>
    <dbReference type="NCBI Taxonomy" id="303877"/>
    <lineage>
        <taxon>Eukaryota</taxon>
        <taxon>Metazoa</taxon>
        <taxon>Ecdysozoa</taxon>
        <taxon>Arthropoda</taxon>
        <taxon>Hexapoda</taxon>
        <taxon>Insecta</taxon>
        <taxon>Pterygota</taxon>
        <taxon>Neoptera</taxon>
        <taxon>Polyneoptera</taxon>
        <taxon>Dictyoptera</taxon>
        <taxon>Blattodea</taxon>
        <taxon>Blattoidea</taxon>
        <taxon>Blattidae</taxon>
        <taxon>Eurycotiinae</taxon>
        <taxon>Eurycotis</taxon>
    </lineage>
</organism>
<sequence length="11" mass="1114">GASGLIPVMRN</sequence>
<accession>P85632</accession>
<proteinExistence type="evidence at protein level"/>
<keyword id="KW-0027">Amidation</keyword>
<keyword id="KW-0903">Direct protein sequencing</keyword>
<keyword id="KW-0527">Neuropeptide</keyword>
<keyword id="KW-0964">Secreted</keyword>